<feature type="chain" id="PRO_0000392570" description="Serine/threonine-protein kinase GM11705">
    <location>
        <begin position="1"/>
        <end position="744"/>
    </location>
</feature>
<feature type="domain" description="Doublecortin 1" evidence="4">
    <location>
        <begin position="154"/>
        <end position="240"/>
    </location>
</feature>
<feature type="domain" description="Doublecortin 2" evidence="4">
    <location>
        <begin position="309"/>
        <end position="392"/>
    </location>
</feature>
<feature type="domain" description="Protein kinase" evidence="5">
    <location>
        <begin position="473"/>
        <end position="731"/>
    </location>
</feature>
<feature type="region of interest" description="Disordered" evidence="7">
    <location>
        <begin position="17"/>
        <end position="38"/>
    </location>
</feature>
<feature type="region of interest" description="Disordered" evidence="7">
    <location>
        <begin position="54"/>
        <end position="78"/>
    </location>
</feature>
<feature type="compositionally biased region" description="Polar residues" evidence="7">
    <location>
        <begin position="17"/>
        <end position="35"/>
    </location>
</feature>
<feature type="active site" description="Proton acceptor" evidence="1 5 6">
    <location>
        <position position="594"/>
    </location>
</feature>
<feature type="binding site" evidence="1 5">
    <location>
        <begin position="479"/>
        <end position="487"/>
    </location>
    <ligand>
        <name>ATP</name>
        <dbReference type="ChEBI" id="CHEBI:30616"/>
    </ligand>
</feature>
<feature type="binding site" evidence="1 5">
    <location>
        <position position="502"/>
    </location>
    <ligand>
        <name>ATP</name>
        <dbReference type="ChEBI" id="CHEBI:30616"/>
    </ligand>
</feature>
<proteinExistence type="inferred from homology"/>
<protein>
    <recommendedName>
        <fullName evidence="2 8">Serine/threonine-protein kinase GM11705</fullName>
        <ecNumber>2.7.11.1</ecNumber>
    </recommendedName>
    <alternativeName>
        <fullName>Doublecortin-like and CAM kinase-like protein</fullName>
    </alternativeName>
</protein>
<sequence>MELEKVKINSLHCNDAVLSSHQPSPSATHPQSVPSKANAVTEASIIEKTNLQHNVQEDNSYNRDCDSPVSSSSEPEKELDDLRYLHSSSLTNSVVVGKSTGSLNGAYSITSVTSKTKTLEPNSASGSACLTIAPTADHIKKRIPSSRTPTRKALRIKFYRNGDRFYPGITIPVSNERYRSFERLFEDLTRLLEENVKIPGAVRTIYNMCGKKITSLDELEDGQSYVCSCNNENFKKVEYNTGSQPLSNLTLTNSRSNSHRLAKCRPSSPLKNGLLAGSNPLPTCGGGTGNGSPHIASRSSDRVTVVHPRIVTLIRSGTKPRRIMRLLLNKRNSPSFDHVLTAITQVVRLDTGYVRKVFTLSGVSVVRLSDFFGSDDVFFAYGTERINTAEDFKLEAEEHRAINVIRKTMRTTGTTCKGPKPKMPIKSKKVYPPVVDSEAFKAATTPEDDRHAALLTSTGMEINELPSNIRNTYTLGRIIGDGNFAIVFKIKHRQTGHSYALKIIDKNKCKGKEHYIDAEVRVMKKLNHPHIISLILSVDQNTNMYLVLEYVSGGDLFDAITQVTRFSESQSRIMIRHLGAAMTYLHSMGIVHRDIKPENLLVKLDEHGHVLELKLADFGLACEVNDLLYAVCGTPTYVAPEILLEVGYGLKIDVWAAGIILYILLCGFPPFVAPDNQQEPLFDAIISGIYEFPDPYWSDIGDGVRDLIANMLQADPDVRFTSEDILDHPWTIGNQGNECTTYKR</sequence>
<organism>
    <name type="scientific">Drosophila sechellia</name>
    <name type="common">Fruit fly</name>
    <dbReference type="NCBI Taxonomy" id="7238"/>
    <lineage>
        <taxon>Eukaryota</taxon>
        <taxon>Metazoa</taxon>
        <taxon>Ecdysozoa</taxon>
        <taxon>Arthropoda</taxon>
        <taxon>Hexapoda</taxon>
        <taxon>Insecta</taxon>
        <taxon>Pterygota</taxon>
        <taxon>Neoptera</taxon>
        <taxon>Endopterygota</taxon>
        <taxon>Diptera</taxon>
        <taxon>Brachycera</taxon>
        <taxon>Muscomorpha</taxon>
        <taxon>Ephydroidea</taxon>
        <taxon>Drosophilidae</taxon>
        <taxon>Drosophila</taxon>
        <taxon>Sophophora</taxon>
    </lineage>
</organism>
<name>DCLK_DROSE</name>
<comment type="catalytic activity">
    <reaction evidence="1">
        <text>L-seryl-[protein] + ATP = O-phospho-L-seryl-[protein] + ADP + H(+)</text>
        <dbReference type="Rhea" id="RHEA:17989"/>
        <dbReference type="Rhea" id="RHEA-COMP:9863"/>
        <dbReference type="Rhea" id="RHEA-COMP:11604"/>
        <dbReference type="ChEBI" id="CHEBI:15378"/>
        <dbReference type="ChEBI" id="CHEBI:29999"/>
        <dbReference type="ChEBI" id="CHEBI:30616"/>
        <dbReference type="ChEBI" id="CHEBI:83421"/>
        <dbReference type="ChEBI" id="CHEBI:456216"/>
        <dbReference type="EC" id="2.7.11.1"/>
    </reaction>
</comment>
<comment type="catalytic activity">
    <reaction evidence="1">
        <text>L-threonyl-[protein] + ATP = O-phospho-L-threonyl-[protein] + ADP + H(+)</text>
        <dbReference type="Rhea" id="RHEA:46608"/>
        <dbReference type="Rhea" id="RHEA-COMP:11060"/>
        <dbReference type="Rhea" id="RHEA-COMP:11605"/>
        <dbReference type="ChEBI" id="CHEBI:15378"/>
        <dbReference type="ChEBI" id="CHEBI:30013"/>
        <dbReference type="ChEBI" id="CHEBI:30616"/>
        <dbReference type="ChEBI" id="CHEBI:61977"/>
        <dbReference type="ChEBI" id="CHEBI:456216"/>
        <dbReference type="EC" id="2.7.11.1"/>
    </reaction>
</comment>
<comment type="similarity">
    <text evidence="3">Belongs to the protein kinase superfamily. CAMK Ser/Thr protein kinase family. CaMK subfamily.</text>
</comment>
<accession>B4IMC3</accession>
<gene>
    <name type="ORF">GM11705</name>
</gene>
<reference evidence="8" key="1">
    <citation type="journal article" date="2007" name="Nature">
        <title>Evolution of genes and genomes on the Drosophila phylogeny.</title>
        <authorList>
            <consortium name="Drosophila 12 genomes consortium"/>
        </authorList>
    </citation>
    <scope>NUCLEOTIDE SEQUENCE [LARGE SCALE GENOMIC DNA]</scope>
    <source>
        <strain evidence="8">Rob3c / Tucson 14021-0248.25</strain>
    </source>
</reference>
<keyword id="KW-0067">ATP-binding</keyword>
<keyword id="KW-0418">Kinase</keyword>
<keyword id="KW-0547">Nucleotide-binding</keyword>
<keyword id="KW-0597">Phosphoprotein</keyword>
<keyword id="KW-1185">Reference proteome</keyword>
<keyword id="KW-0677">Repeat</keyword>
<keyword id="KW-0723">Serine/threonine-protein kinase</keyword>
<keyword id="KW-0808">Transferase</keyword>
<dbReference type="EC" id="2.7.11.1"/>
<dbReference type="EMBL" id="CH480967">
    <property type="protein sequence ID" value="EDW45601.1"/>
    <property type="molecule type" value="Genomic_DNA"/>
</dbReference>
<dbReference type="RefSeq" id="XP_002044883.1">
    <property type="nucleotide sequence ID" value="XM_002044847.1"/>
</dbReference>
<dbReference type="SMR" id="B4IMC3"/>
<dbReference type="STRING" id="7238.B4IMC3"/>
<dbReference type="EnsemblMetazoa" id="FBtr0194690">
    <property type="protein sequence ID" value="FBpp0193182"/>
    <property type="gene ID" value="FBgn0166648"/>
</dbReference>
<dbReference type="EnsemblMetazoa" id="XM_032720600.1">
    <property type="protein sequence ID" value="XP_032576491.1"/>
    <property type="gene ID" value="LOC6620680"/>
</dbReference>
<dbReference type="EnsemblMetazoa" id="XM_032720601.1">
    <property type="protein sequence ID" value="XP_032576492.1"/>
    <property type="gene ID" value="LOC6620680"/>
</dbReference>
<dbReference type="HOGENOM" id="CLU_000288_94_1_1"/>
<dbReference type="OMA" id="LMTECKV"/>
<dbReference type="PhylomeDB" id="B4IMC3"/>
<dbReference type="Proteomes" id="UP000001292">
    <property type="component" value="Unassembled WGS sequence"/>
</dbReference>
<dbReference type="GO" id="GO:0005524">
    <property type="term" value="F:ATP binding"/>
    <property type="evidence" value="ECO:0007669"/>
    <property type="project" value="UniProtKB-KW"/>
</dbReference>
<dbReference type="GO" id="GO:0106310">
    <property type="term" value="F:protein serine kinase activity"/>
    <property type="evidence" value="ECO:0007669"/>
    <property type="project" value="RHEA"/>
</dbReference>
<dbReference type="GO" id="GO:0004674">
    <property type="term" value="F:protein serine/threonine kinase activity"/>
    <property type="evidence" value="ECO:0000250"/>
    <property type="project" value="UniProtKB"/>
</dbReference>
<dbReference type="GO" id="GO:0035556">
    <property type="term" value="P:intracellular signal transduction"/>
    <property type="evidence" value="ECO:0007669"/>
    <property type="project" value="InterPro"/>
</dbReference>
<dbReference type="CDD" id="cd16109">
    <property type="entry name" value="DCX1"/>
    <property type="match status" value="1"/>
</dbReference>
<dbReference type="FunFam" id="3.30.200.20:FF:000042">
    <property type="entry name" value="Aurora kinase A"/>
    <property type="match status" value="1"/>
</dbReference>
<dbReference type="FunFam" id="1.10.510.10:FF:000866">
    <property type="entry name" value="Serine/threonine-protein kinase GA29083"/>
    <property type="match status" value="1"/>
</dbReference>
<dbReference type="FunFam" id="3.10.20.230:FF:000017">
    <property type="entry name" value="Serine/threonine-protein kinase GA29083"/>
    <property type="match status" value="1"/>
</dbReference>
<dbReference type="FunFam" id="3.10.20.230:FF:000021">
    <property type="entry name" value="Serine/threonine-protein kinase GA29083"/>
    <property type="match status" value="1"/>
</dbReference>
<dbReference type="Gene3D" id="3.10.20.230">
    <property type="entry name" value="Doublecortin domain"/>
    <property type="match status" value="2"/>
</dbReference>
<dbReference type="Gene3D" id="1.10.510.10">
    <property type="entry name" value="Transferase(Phosphotransferase) domain 1"/>
    <property type="match status" value="1"/>
</dbReference>
<dbReference type="InterPro" id="IPR003533">
    <property type="entry name" value="Doublecortin_dom"/>
</dbReference>
<dbReference type="InterPro" id="IPR036572">
    <property type="entry name" value="Doublecortin_dom_sf"/>
</dbReference>
<dbReference type="InterPro" id="IPR011009">
    <property type="entry name" value="Kinase-like_dom_sf"/>
</dbReference>
<dbReference type="InterPro" id="IPR000719">
    <property type="entry name" value="Prot_kinase_dom"/>
</dbReference>
<dbReference type="InterPro" id="IPR017441">
    <property type="entry name" value="Protein_kinase_ATP_BS"/>
</dbReference>
<dbReference type="InterPro" id="IPR008271">
    <property type="entry name" value="Ser/Thr_kinase_AS"/>
</dbReference>
<dbReference type="PANTHER" id="PTHR24347">
    <property type="entry name" value="SERINE/THREONINE-PROTEIN KINASE"/>
    <property type="match status" value="1"/>
</dbReference>
<dbReference type="Pfam" id="PF03607">
    <property type="entry name" value="DCX"/>
    <property type="match status" value="2"/>
</dbReference>
<dbReference type="Pfam" id="PF00069">
    <property type="entry name" value="Pkinase"/>
    <property type="match status" value="1"/>
</dbReference>
<dbReference type="SMART" id="SM00537">
    <property type="entry name" value="DCX"/>
    <property type="match status" value="2"/>
</dbReference>
<dbReference type="SMART" id="SM00220">
    <property type="entry name" value="S_TKc"/>
    <property type="match status" value="1"/>
</dbReference>
<dbReference type="SUPFAM" id="SSF89837">
    <property type="entry name" value="Doublecortin (DC)"/>
    <property type="match status" value="2"/>
</dbReference>
<dbReference type="SUPFAM" id="SSF56112">
    <property type="entry name" value="Protein kinase-like (PK-like)"/>
    <property type="match status" value="1"/>
</dbReference>
<dbReference type="PROSITE" id="PS50309">
    <property type="entry name" value="DC"/>
    <property type="match status" value="2"/>
</dbReference>
<dbReference type="PROSITE" id="PS00107">
    <property type="entry name" value="PROTEIN_KINASE_ATP"/>
    <property type="match status" value="1"/>
</dbReference>
<dbReference type="PROSITE" id="PS50011">
    <property type="entry name" value="PROTEIN_KINASE_DOM"/>
    <property type="match status" value="1"/>
</dbReference>
<dbReference type="PROSITE" id="PS00108">
    <property type="entry name" value="PROTEIN_KINASE_ST"/>
    <property type="match status" value="1"/>
</dbReference>
<evidence type="ECO:0000250" key="1">
    <source>
        <dbReference type="UniProtKB" id="P28523"/>
    </source>
</evidence>
<evidence type="ECO:0000250" key="2">
    <source>
        <dbReference type="UniProtKB" id="Q7PLI7"/>
    </source>
</evidence>
<evidence type="ECO:0000255" key="3"/>
<evidence type="ECO:0000255" key="4">
    <source>
        <dbReference type="PROSITE-ProRule" id="PRU00072"/>
    </source>
</evidence>
<evidence type="ECO:0000255" key="5">
    <source>
        <dbReference type="PROSITE-ProRule" id="PRU00159"/>
    </source>
</evidence>
<evidence type="ECO:0000255" key="6">
    <source>
        <dbReference type="PROSITE-ProRule" id="PRU10027"/>
    </source>
</evidence>
<evidence type="ECO:0000256" key="7">
    <source>
        <dbReference type="SAM" id="MobiDB-lite"/>
    </source>
</evidence>
<evidence type="ECO:0000312" key="8">
    <source>
        <dbReference type="EMBL" id="EDW45601.1"/>
    </source>
</evidence>